<sequence>MKTFELEGKGREIVARSADQKRALKAMRKNNEIPAVLYGGEKVTHFTVTKEAVRKLVYTPEIFVVELSIDGNKTMAIVKDMQFQPVTDEILHMDFLEVSKDKAVVMEVPVVLEGHAEGVKAGGKLSLQMRKLKVKAIYDQIPEKLTINVDHLGLGKTMQVGALHFEGLELMNAKNAVVCAVQLTRAARGAQAKG</sequence>
<reference key="1">
    <citation type="journal article" date="2007" name="PLoS Biol.">
        <title>Evolution of symbiotic bacteria in the distal human intestine.</title>
        <authorList>
            <person name="Xu J."/>
            <person name="Mahowald M.A."/>
            <person name="Ley R.E."/>
            <person name="Lozupone C.A."/>
            <person name="Hamady M."/>
            <person name="Martens E.C."/>
            <person name="Henrissat B."/>
            <person name="Coutinho P.M."/>
            <person name="Minx P."/>
            <person name="Latreille P."/>
            <person name="Cordum H."/>
            <person name="Van Brunt A."/>
            <person name="Kim K."/>
            <person name="Fulton R.S."/>
            <person name="Fulton L.A."/>
            <person name="Clifton S.W."/>
            <person name="Wilson R.K."/>
            <person name="Knight R.D."/>
            <person name="Gordon J.I."/>
        </authorList>
    </citation>
    <scope>NUCLEOTIDE SEQUENCE [LARGE SCALE GENOMIC DNA]</scope>
    <source>
        <strain>ATCC 8503 / DSM 20701 / CIP 104284 / JCM 5825 / NCTC 11152</strain>
    </source>
</reference>
<name>RL25_PARD8</name>
<dbReference type="EMBL" id="CP000140">
    <property type="protein sequence ID" value="ABR42118.1"/>
    <property type="molecule type" value="Genomic_DNA"/>
</dbReference>
<dbReference type="RefSeq" id="WP_005861962.1">
    <property type="nucleotide sequence ID" value="NZ_LR215978.1"/>
</dbReference>
<dbReference type="SMR" id="A6L8V4"/>
<dbReference type="STRING" id="435591.BDI_0333"/>
<dbReference type="PaxDb" id="435591-BDI_0333"/>
<dbReference type="KEGG" id="pdi:BDI_0333"/>
<dbReference type="eggNOG" id="COG1825">
    <property type="taxonomic scope" value="Bacteria"/>
</dbReference>
<dbReference type="HOGENOM" id="CLU_075939_2_1_10"/>
<dbReference type="BioCyc" id="PDIS435591:G1G5A-344-MONOMER"/>
<dbReference type="Proteomes" id="UP000000566">
    <property type="component" value="Chromosome"/>
</dbReference>
<dbReference type="GO" id="GO:0022625">
    <property type="term" value="C:cytosolic large ribosomal subunit"/>
    <property type="evidence" value="ECO:0007669"/>
    <property type="project" value="TreeGrafter"/>
</dbReference>
<dbReference type="GO" id="GO:0008097">
    <property type="term" value="F:5S rRNA binding"/>
    <property type="evidence" value="ECO:0007669"/>
    <property type="project" value="InterPro"/>
</dbReference>
<dbReference type="GO" id="GO:0003735">
    <property type="term" value="F:structural constituent of ribosome"/>
    <property type="evidence" value="ECO:0007669"/>
    <property type="project" value="InterPro"/>
</dbReference>
<dbReference type="GO" id="GO:0006412">
    <property type="term" value="P:translation"/>
    <property type="evidence" value="ECO:0007669"/>
    <property type="project" value="UniProtKB-UniRule"/>
</dbReference>
<dbReference type="CDD" id="cd00495">
    <property type="entry name" value="Ribosomal_L25_TL5_CTC"/>
    <property type="match status" value="1"/>
</dbReference>
<dbReference type="Gene3D" id="2.170.120.20">
    <property type="entry name" value="Ribosomal protein L25, beta domain"/>
    <property type="match status" value="1"/>
</dbReference>
<dbReference type="Gene3D" id="2.40.240.10">
    <property type="entry name" value="Ribosomal Protein L25, Chain P"/>
    <property type="match status" value="1"/>
</dbReference>
<dbReference type="HAMAP" id="MF_01334">
    <property type="entry name" value="Ribosomal_bL25_CTC"/>
    <property type="match status" value="1"/>
</dbReference>
<dbReference type="InterPro" id="IPR020056">
    <property type="entry name" value="Rbsml_bL25/Gln-tRNA_synth_N"/>
</dbReference>
<dbReference type="InterPro" id="IPR011035">
    <property type="entry name" value="Ribosomal_bL25/Gln-tRNA_synth"/>
</dbReference>
<dbReference type="InterPro" id="IPR020057">
    <property type="entry name" value="Ribosomal_bL25_b-dom"/>
</dbReference>
<dbReference type="InterPro" id="IPR037121">
    <property type="entry name" value="Ribosomal_bL25_C"/>
</dbReference>
<dbReference type="InterPro" id="IPR001021">
    <property type="entry name" value="Ribosomal_bL25_long"/>
</dbReference>
<dbReference type="InterPro" id="IPR029751">
    <property type="entry name" value="Ribosomal_L25_dom"/>
</dbReference>
<dbReference type="InterPro" id="IPR020930">
    <property type="entry name" value="Ribosomal_uL5_bac-type"/>
</dbReference>
<dbReference type="NCBIfam" id="TIGR00731">
    <property type="entry name" value="bL25_bact_ctc"/>
    <property type="match status" value="1"/>
</dbReference>
<dbReference type="NCBIfam" id="NF004132">
    <property type="entry name" value="PRK05618.2-2"/>
    <property type="match status" value="1"/>
</dbReference>
<dbReference type="PANTHER" id="PTHR33284">
    <property type="entry name" value="RIBOSOMAL PROTEIN L25/GLN-TRNA SYNTHETASE, ANTI-CODON-BINDING DOMAIN-CONTAINING PROTEIN"/>
    <property type="match status" value="1"/>
</dbReference>
<dbReference type="PANTHER" id="PTHR33284:SF1">
    <property type="entry name" value="RIBOSOMAL PROTEIN L25_GLN-TRNA SYNTHETASE, ANTI-CODON-BINDING DOMAIN-CONTAINING PROTEIN"/>
    <property type="match status" value="1"/>
</dbReference>
<dbReference type="Pfam" id="PF01386">
    <property type="entry name" value="Ribosomal_L25p"/>
    <property type="match status" value="1"/>
</dbReference>
<dbReference type="Pfam" id="PF14693">
    <property type="entry name" value="Ribosomal_TL5_C"/>
    <property type="match status" value="1"/>
</dbReference>
<dbReference type="SUPFAM" id="SSF50715">
    <property type="entry name" value="Ribosomal protein L25-like"/>
    <property type="match status" value="1"/>
</dbReference>
<gene>
    <name evidence="1" type="primary">rplY</name>
    <name evidence="1" type="synonym">ctc</name>
    <name type="ordered locus">BDI_0333</name>
</gene>
<proteinExistence type="inferred from homology"/>
<accession>A6L8V4</accession>
<organism>
    <name type="scientific">Parabacteroides distasonis (strain ATCC 8503 / DSM 20701 / CIP 104284 / JCM 5825 / NCTC 11152)</name>
    <dbReference type="NCBI Taxonomy" id="435591"/>
    <lineage>
        <taxon>Bacteria</taxon>
        <taxon>Pseudomonadati</taxon>
        <taxon>Bacteroidota</taxon>
        <taxon>Bacteroidia</taxon>
        <taxon>Bacteroidales</taxon>
        <taxon>Tannerellaceae</taxon>
        <taxon>Parabacteroides</taxon>
    </lineage>
</organism>
<keyword id="KW-1185">Reference proteome</keyword>
<keyword id="KW-0687">Ribonucleoprotein</keyword>
<keyword id="KW-0689">Ribosomal protein</keyword>
<keyword id="KW-0694">RNA-binding</keyword>
<keyword id="KW-0699">rRNA-binding</keyword>
<protein>
    <recommendedName>
        <fullName evidence="1">Large ribosomal subunit protein bL25</fullName>
    </recommendedName>
    <alternativeName>
        <fullName evidence="2">50S ribosomal protein L25</fullName>
    </alternativeName>
    <alternativeName>
        <fullName evidence="1">General stress protein CTC</fullName>
    </alternativeName>
</protein>
<feature type="chain" id="PRO_1000052912" description="Large ribosomal subunit protein bL25">
    <location>
        <begin position="1"/>
        <end position="194"/>
    </location>
</feature>
<evidence type="ECO:0000255" key="1">
    <source>
        <dbReference type="HAMAP-Rule" id="MF_01334"/>
    </source>
</evidence>
<evidence type="ECO:0000305" key="2"/>
<comment type="function">
    <text evidence="1">This is one of the proteins that binds to the 5S RNA in the ribosome where it forms part of the central protuberance.</text>
</comment>
<comment type="subunit">
    <text evidence="1">Part of the 50S ribosomal subunit; part of the 5S rRNA/L5/L18/L25 subcomplex. Contacts the 5S rRNA. Binds to the 5S rRNA independently of L5 and L18.</text>
</comment>
<comment type="similarity">
    <text evidence="1">Belongs to the bacterial ribosomal protein bL25 family. CTC subfamily.</text>
</comment>